<feature type="chain" id="PRO_0000235505" description="Aspartate--tRNA(Asp/Asn) ligase">
    <location>
        <begin position="1"/>
        <end position="614"/>
    </location>
</feature>
<feature type="region of interest" description="Aspartate" evidence="1">
    <location>
        <begin position="221"/>
        <end position="224"/>
    </location>
</feature>
<feature type="binding site" evidence="1">
    <location>
        <position position="197"/>
    </location>
    <ligand>
        <name>L-aspartate</name>
        <dbReference type="ChEBI" id="CHEBI:29991"/>
    </ligand>
</feature>
<feature type="binding site" evidence="1">
    <location>
        <begin position="243"/>
        <end position="245"/>
    </location>
    <ligand>
        <name>ATP</name>
        <dbReference type="ChEBI" id="CHEBI:30616"/>
    </ligand>
</feature>
<feature type="binding site" evidence="1">
    <location>
        <position position="243"/>
    </location>
    <ligand>
        <name>L-aspartate</name>
        <dbReference type="ChEBI" id="CHEBI:29991"/>
    </ligand>
</feature>
<feature type="binding site" evidence="1">
    <location>
        <position position="252"/>
    </location>
    <ligand>
        <name>ATP</name>
        <dbReference type="ChEBI" id="CHEBI:30616"/>
    </ligand>
</feature>
<feature type="binding site" evidence="1">
    <location>
        <position position="477"/>
    </location>
    <ligand>
        <name>L-aspartate</name>
        <dbReference type="ChEBI" id="CHEBI:29991"/>
    </ligand>
</feature>
<feature type="binding site" evidence="1">
    <location>
        <position position="507"/>
    </location>
    <ligand>
        <name>ATP</name>
        <dbReference type="ChEBI" id="CHEBI:30616"/>
    </ligand>
</feature>
<feature type="binding site" evidence="1">
    <location>
        <position position="514"/>
    </location>
    <ligand>
        <name>L-aspartate</name>
        <dbReference type="ChEBI" id="CHEBI:29991"/>
    </ligand>
</feature>
<feature type="binding site" evidence="1">
    <location>
        <begin position="559"/>
        <end position="562"/>
    </location>
    <ligand>
        <name>ATP</name>
        <dbReference type="ChEBI" id="CHEBI:30616"/>
    </ligand>
</feature>
<feature type="site" description="Important for tRNA non-discrimination" evidence="1">
    <location>
        <position position="49"/>
    </location>
</feature>
<name>SYDND_TRIV2</name>
<organism>
    <name type="scientific">Trichormus variabilis (strain ATCC 29413 / PCC 7937)</name>
    <name type="common">Anabaena variabilis</name>
    <dbReference type="NCBI Taxonomy" id="240292"/>
    <lineage>
        <taxon>Bacteria</taxon>
        <taxon>Bacillati</taxon>
        <taxon>Cyanobacteriota</taxon>
        <taxon>Cyanophyceae</taxon>
        <taxon>Nostocales</taxon>
        <taxon>Nostocaceae</taxon>
        <taxon>Trichormus</taxon>
    </lineage>
</organism>
<reference key="1">
    <citation type="journal article" date="2014" name="Stand. Genomic Sci.">
        <title>Complete genome sequence of Anabaena variabilis ATCC 29413.</title>
        <authorList>
            <person name="Thiel T."/>
            <person name="Pratte B.S."/>
            <person name="Zhong J."/>
            <person name="Goodwin L."/>
            <person name="Copeland A."/>
            <person name="Lucas S."/>
            <person name="Han C."/>
            <person name="Pitluck S."/>
            <person name="Land M.L."/>
            <person name="Kyrpides N.C."/>
            <person name="Woyke T."/>
        </authorList>
    </citation>
    <scope>NUCLEOTIDE SEQUENCE [LARGE SCALE GENOMIC DNA]</scope>
    <source>
        <strain>ATCC 29413 / PCC 7937</strain>
    </source>
</reference>
<keyword id="KW-0030">Aminoacyl-tRNA synthetase</keyword>
<keyword id="KW-0067">ATP-binding</keyword>
<keyword id="KW-0963">Cytoplasm</keyword>
<keyword id="KW-0436">Ligase</keyword>
<keyword id="KW-0547">Nucleotide-binding</keyword>
<keyword id="KW-0648">Protein biosynthesis</keyword>
<accession>Q3MGL3</accession>
<dbReference type="EC" id="6.1.1.23" evidence="1"/>
<dbReference type="EMBL" id="CP000117">
    <property type="protein sequence ID" value="ABA19873.1"/>
    <property type="molecule type" value="Genomic_DNA"/>
</dbReference>
<dbReference type="SMR" id="Q3MGL3"/>
<dbReference type="STRING" id="240292.Ava_0247"/>
<dbReference type="KEGG" id="ava:Ava_0247"/>
<dbReference type="eggNOG" id="COG0173">
    <property type="taxonomic scope" value="Bacteria"/>
</dbReference>
<dbReference type="HOGENOM" id="CLU_014330_3_2_3"/>
<dbReference type="Proteomes" id="UP000002533">
    <property type="component" value="Chromosome"/>
</dbReference>
<dbReference type="GO" id="GO:0005737">
    <property type="term" value="C:cytoplasm"/>
    <property type="evidence" value="ECO:0007669"/>
    <property type="project" value="UniProtKB-SubCell"/>
</dbReference>
<dbReference type="GO" id="GO:0004815">
    <property type="term" value="F:aspartate-tRNA ligase activity"/>
    <property type="evidence" value="ECO:0007669"/>
    <property type="project" value="UniProtKB-UniRule"/>
</dbReference>
<dbReference type="GO" id="GO:0050560">
    <property type="term" value="F:aspartate-tRNA(Asn) ligase activity"/>
    <property type="evidence" value="ECO:0007669"/>
    <property type="project" value="UniProtKB-EC"/>
</dbReference>
<dbReference type="GO" id="GO:0005524">
    <property type="term" value="F:ATP binding"/>
    <property type="evidence" value="ECO:0007669"/>
    <property type="project" value="UniProtKB-UniRule"/>
</dbReference>
<dbReference type="GO" id="GO:0003676">
    <property type="term" value="F:nucleic acid binding"/>
    <property type="evidence" value="ECO:0007669"/>
    <property type="project" value="InterPro"/>
</dbReference>
<dbReference type="GO" id="GO:0006422">
    <property type="term" value="P:aspartyl-tRNA aminoacylation"/>
    <property type="evidence" value="ECO:0007669"/>
    <property type="project" value="UniProtKB-UniRule"/>
</dbReference>
<dbReference type="CDD" id="cd00777">
    <property type="entry name" value="AspRS_core"/>
    <property type="match status" value="1"/>
</dbReference>
<dbReference type="CDD" id="cd04317">
    <property type="entry name" value="EcAspRS_like_N"/>
    <property type="match status" value="1"/>
</dbReference>
<dbReference type="Gene3D" id="3.30.930.10">
    <property type="entry name" value="Bira Bifunctional Protein, Domain 2"/>
    <property type="match status" value="1"/>
</dbReference>
<dbReference type="Gene3D" id="3.30.1360.30">
    <property type="entry name" value="GAD-like domain"/>
    <property type="match status" value="1"/>
</dbReference>
<dbReference type="Gene3D" id="2.40.50.140">
    <property type="entry name" value="Nucleic acid-binding proteins"/>
    <property type="match status" value="1"/>
</dbReference>
<dbReference type="HAMAP" id="MF_00044">
    <property type="entry name" value="Asp_tRNA_synth_type1"/>
    <property type="match status" value="1"/>
</dbReference>
<dbReference type="InterPro" id="IPR004364">
    <property type="entry name" value="Aa-tRNA-synt_II"/>
</dbReference>
<dbReference type="InterPro" id="IPR006195">
    <property type="entry name" value="aa-tRNA-synth_II"/>
</dbReference>
<dbReference type="InterPro" id="IPR045864">
    <property type="entry name" value="aa-tRNA-synth_II/BPL/LPL"/>
</dbReference>
<dbReference type="InterPro" id="IPR004524">
    <property type="entry name" value="Asp-tRNA-ligase_1"/>
</dbReference>
<dbReference type="InterPro" id="IPR047089">
    <property type="entry name" value="Asp-tRNA-ligase_1_N"/>
</dbReference>
<dbReference type="InterPro" id="IPR002312">
    <property type="entry name" value="Asp/Asn-tRNA-synth_IIb"/>
</dbReference>
<dbReference type="InterPro" id="IPR047090">
    <property type="entry name" value="AspRS_core"/>
</dbReference>
<dbReference type="InterPro" id="IPR004115">
    <property type="entry name" value="GAD-like_sf"/>
</dbReference>
<dbReference type="InterPro" id="IPR029351">
    <property type="entry name" value="GAD_dom"/>
</dbReference>
<dbReference type="InterPro" id="IPR012340">
    <property type="entry name" value="NA-bd_OB-fold"/>
</dbReference>
<dbReference type="InterPro" id="IPR004365">
    <property type="entry name" value="NA-bd_OB_tRNA"/>
</dbReference>
<dbReference type="NCBIfam" id="TIGR00459">
    <property type="entry name" value="aspS_bact"/>
    <property type="match status" value="1"/>
</dbReference>
<dbReference type="NCBIfam" id="NF001750">
    <property type="entry name" value="PRK00476.1"/>
    <property type="match status" value="1"/>
</dbReference>
<dbReference type="PANTHER" id="PTHR22594:SF5">
    <property type="entry name" value="ASPARTATE--TRNA LIGASE, MITOCHONDRIAL"/>
    <property type="match status" value="1"/>
</dbReference>
<dbReference type="PANTHER" id="PTHR22594">
    <property type="entry name" value="ASPARTYL/LYSYL-TRNA SYNTHETASE"/>
    <property type="match status" value="1"/>
</dbReference>
<dbReference type="Pfam" id="PF02938">
    <property type="entry name" value="GAD"/>
    <property type="match status" value="1"/>
</dbReference>
<dbReference type="Pfam" id="PF00152">
    <property type="entry name" value="tRNA-synt_2"/>
    <property type="match status" value="1"/>
</dbReference>
<dbReference type="Pfam" id="PF01336">
    <property type="entry name" value="tRNA_anti-codon"/>
    <property type="match status" value="1"/>
</dbReference>
<dbReference type="PRINTS" id="PR01042">
    <property type="entry name" value="TRNASYNTHASP"/>
</dbReference>
<dbReference type="SUPFAM" id="SSF55681">
    <property type="entry name" value="Class II aaRS and biotin synthetases"/>
    <property type="match status" value="1"/>
</dbReference>
<dbReference type="SUPFAM" id="SSF55261">
    <property type="entry name" value="GAD domain-like"/>
    <property type="match status" value="1"/>
</dbReference>
<dbReference type="SUPFAM" id="SSF50249">
    <property type="entry name" value="Nucleic acid-binding proteins"/>
    <property type="match status" value="1"/>
</dbReference>
<dbReference type="PROSITE" id="PS50862">
    <property type="entry name" value="AA_TRNA_LIGASE_II"/>
    <property type="match status" value="1"/>
</dbReference>
<sequence length="614" mass="70073">MGRLWHSLANLARKNKLTTMRTHYCGELRQKDIGETVTLYGWVDRRRDHGGVIFLDLRDRSGIVQVVSDPQRTPDSYELANSLRNEYVVEITGRVTQRPEESLNSRIPTGEVEIYADKIELLNGVRKQLPFQVSTADTETVREDLRLKYRYLDLRRDRMARNIQLRHQVVKAMRRYLEDVEGFIEVETPILTRSTPEGARDYVLPSRVNPGEWFALPQSPQLFKQILMVSGMDRYYQIARCFRDEDLRADRQPEFTQLDMEMSFMSEEEIIQLNEKLVSYIFKTVKGVELPLPFPRLTYAEAMERYGCDKPDTRYDLQLVNVSDVMKDSGFKVFRDAVANGGIVKILPIPNGNEQISNVRIKPGGDLFREASEAGAKGLAYIRVREDGEIDTIGAIKDNLSEEQKQEILQRTGAKPGHLLLFGAGDAATVNKTLDRLRQAIAKEFGLIDPDKINLLWVVDFPMFEWNADEKRLEALHHPFTAPHPDDLHDLKTARAQAYDLVFNGFEVGGGSRRIYQREVQEQVFETIGLSPEEAQNKFGFLLEAFEYGTPPHGGIAYGLDRLVMLFAGEESIRDVIAFPKTQQARCLLTDAPSGVDVKQLKELHVASTYKPKS</sequence>
<evidence type="ECO:0000255" key="1">
    <source>
        <dbReference type="HAMAP-Rule" id="MF_00044"/>
    </source>
</evidence>
<gene>
    <name evidence="1" type="primary">aspS</name>
    <name type="ordered locus">Ava_0247</name>
</gene>
<proteinExistence type="inferred from homology"/>
<comment type="function">
    <text evidence="1">Aspartyl-tRNA synthetase with relaxed tRNA specificity since it is able to aspartylate not only its cognate tRNA(Asp) but also tRNA(Asn). Reaction proceeds in two steps: L-aspartate is first activated by ATP to form Asp-AMP and then transferred to the acceptor end of tRNA(Asp/Asn).</text>
</comment>
<comment type="catalytic activity">
    <reaction evidence="1">
        <text>tRNA(Asx) + L-aspartate + ATP = L-aspartyl-tRNA(Asx) + AMP + diphosphate</text>
        <dbReference type="Rhea" id="RHEA:18349"/>
        <dbReference type="Rhea" id="RHEA-COMP:9710"/>
        <dbReference type="Rhea" id="RHEA-COMP:9711"/>
        <dbReference type="ChEBI" id="CHEBI:29991"/>
        <dbReference type="ChEBI" id="CHEBI:30616"/>
        <dbReference type="ChEBI" id="CHEBI:33019"/>
        <dbReference type="ChEBI" id="CHEBI:78442"/>
        <dbReference type="ChEBI" id="CHEBI:78516"/>
        <dbReference type="ChEBI" id="CHEBI:456215"/>
        <dbReference type="EC" id="6.1.1.23"/>
    </reaction>
</comment>
<comment type="subunit">
    <text evidence="1">Homodimer.</text>
</comment>
<comment type="subcellular location">
    <subcellularLocation>
        <location evidence="1">Cytoplasm</location>
    </subcellularLocation>
</comment>
<comment type="similarity">
    <text evidence="1">Belongs to the class-II aminoacyl-tRNA synthetase family. Type 1 subfamily.</text>
</comment>
<protein>
    <recommendedName>
        <fullName evidence="1">Aspartate--tRNA(Asp/Asn) ligase</fullName>
        <ecNumber evidence="1">6.1.1.23</ecNumber>
    </recommendedName>
    <alternativeName>
        <fullName evidence="1">Aspartyl-tRNA synthetase</fullName>
        <shortName evidence="1">AspRS</shortName>
    </alternativeName>
    <alternativeName>
        <fullName evidence="1">Non-discriminating aspartyl-tRNA synthetase</fullName>
        <shortName evidence="1">ND-AspRS</shortName>
    </alternativeName>
</protein>